<proteinExistence type="inferred from homology"/>
<organism>
    <name type="scientific">Saccharolobus islandicus (strain L.S.2.15 / Lassen #1)</name>
    <name type="common">Sulfolobus islandicus</name>
    <dbReference type="NCBI Taxonomy" id="429572"/>
    <lineage>
        <taxon>Archaea</taxon>
        <taxon>Thermoproteota</taxon>
        <taxon>Thermoprotei</taxon>
        <taxon>Sulfolobales</taxon>
        <taxon>Sulfolobaceae</taxon>
        <taxon>Saccharolobus</taxon>
    </lineage>
</organism>
<gene>
    <name evidence="1" type="primary">rpl4</name>
    <name type="ordered locus">LS215_1516</name>
</gene>
<reference key="1">
    <citation type="journal article" date="2009" name="Proc. Natl. Acad. Sci. U.S.A.">
        <title>Biogeography of the Sulfolobus islandicus pan-genome.</title>
        <authorList>
            <person name="Reno M.L."/>
            <person name="Held N.L."/>
            <person name="Fields C.J."/>
            <person name="Burke P.V."/>
            <person name="Whitaker R.J."/>
        </authorList>
    </citation>
    <scope>NUCLEOTIDE SEQUENCE [LARGE SCALE GENOMIC DNA]</scope>
    <source>
        <strain>L.S.2.15 / Lassen #1</strain>
    </source>
</reference>
<comment type="function">
    <text evidence="1">One of the primary rRNA binding proteins, this protein initially binds near the 5'-end of the 23S rRNA. It is important during the early stages of 50S assembly. It makes multiple contacts with different domains of the 23S rRNA in the assembled 50S subunit and ribosome.</text>
</comment>
<comment type="function">
    <text evidence="1">Forms part of the polypeptide exit tunnel.</text>
</comment>
<comment type="subunit">
    <text evidence="1">Part of the 50S ribosomal subunit.</text>
</comment>
<comment type="similarity">
    <text evidence="1">Belongs to the universal ribosomal protein uL4 family.</text>
</comment>
<protein>
    <recommendedName>
        <fullName evidence="1">Large ribosomal subunit protein uL4</fullName>
    </recommendedName>
    <alternativeName>
        <fullName evidence="2">50S ribosomal protein L4</fullName>
    </alternativeName>
</protein>
<feature type="chain" id="PRO_1000214586" description="Large ribosomal subunit protein uL4">
    <location>
        <begin position="1"/>
        <end position="267"/>
    </location>
</feature>
<sequence length="267" mass="29473">MYLELVKKNSVILDKDGNKVKEVELPFIFSFPVRKDIIRRVFLAEFTHSLQPKGRDPMAGKRTSAESFGINLGMARVPRVKNSGEAALAPNTVGGRLTFPPSVDKKLVEEANDKEKQLAVISALSATADKVFVKARGHVFKDSVSFPIVVTDDIVSLKTASEVEEFLEKIGVYDDVKRVKERIRIRAGKGKMRGRKYKESIGPLIIVHDSNSPIVKAARNIAGVDVVNAKDVSVIHLAPGTHSGRLTIYTETSIKILDERLSKRLVS</sequence>
<evidence type="ECO:0000255" key="1">
    <source>
        <dbReference type="HAMAP-Rule" id="MF_01328"/>
    </source>
</evidence>
<evidence type="ECO:0000305" key="2"/>
<accession>C3MQ60</accession>
<dbReference type="EMBL" id="CP001399">
    <property type="protein sequence ID" value="ACP35523.1"/>
    <property type="molecule type" value="Genomic_DNA"/>
</dbReference>
<dbReference type="RefSeq" id="WP_012713735.1">
    <property type="nucleotide sequence ID" value="NC_012589.1"/>
</dbReference>
<dbReference type="SMR" id="C3MQ60"/>
<dbReference type="GeneID" id="7799146"/>
<dbReference type="KEGG" id="sis:LS215_1516"/>
<dbReference type="HOGENOM" id="CLU_026535_0_0_2"/>
<dbReference type="OrthoDB" id="10737at2157"/>
<dbReference type="Proteomes" id="UP000001747">
    <property type="component" value="Chromosome"/>
</dbReference>
<dbReference type="GO" id="GO:1990904">
    <property type="term" value="C:ribonucleoprotein complex"/>
    <property type="evidence" value="ECO:0007669"/>
    <property type="project" value="UniProtKB-KW"/>
</dbReference>
<dbReference type="GO" id="GO:0005840">
    <property type="term" value="C:ribosome"/>
    <property type="evidence" value="ECO:0007669"/>
    <property type="project" value="UniProtKB-KW"/>
</dbReference>
<dbReference type="GO" id="GO:0019843">
    <property type="term" value="F:rRNA binding"/>
    <property type="evidence" value="ECO:0007669"/>
    <property type="project" value="UniProtKB-UniRule"/>
</dbReference>
<dbReference type="GO" id="GO:0003735">
    <property type="term" value="F:structural constituent of ribosome"/>
    <property type="evidence" value="ECO:0007669"/>
    <property type="project" value="InterPro"/>
</dbReference>
<dbReference type="GO" id="GO:0006412">
    <property type="term" value="P:translation"/>
    <property type="evidence" value="ECO:0007669"/>
    <property type="project" value="UniProtKB-UniRule"/>
</dbReference>
<dbReference type="FunFam" id="3.40.1370.10:FF:000011">
    <property type="entry name" value="50S ribosomal protein L4"/>
    <property type="match status" value="1"/>
</dbReference>
<dbReference type="Gene3D" id="3.40.1370.10">
    <property type="match status" value="1"/>
</dbReference>
<dbReference type="HAMAP" id="MF_01328_A">
    <property type="entry name" value="Ribosomal_uL4_A"/>
    <property type="match status" value="1"/>
</dbReference>
<dbReference type="InterPro" id="IPR002136">
    <property type="entry name" value="Ribosomal_uL4"/>
</dbReference>
<dbReference type="InterPro" id="IPR023574">
    <property type="entry name" value="Ribosomal_uL4_dom_sf"/>
</dbReference>
<dbReference type="InterPro" id="IPR013000">
    <property type="entry name" value="Ribosomal_uL4_euk/arc_CS"/>
</dbReference>
<dbReference type="InterPro" id="IPR045240">
    <property type="entry name" value="Ribosomal_uL4_euk/arch"/>
</dbReference>
<dbReference type="InterPro" id="IPR019970">
    <property type="entry name" value="Ribosomall_uL4-arc"/>
</dbReference>
<dbReference type="NCBIfam" id="TIGR03672">
    <property type="entry name" value="rpl4p_arch"/>
    <property type="match status" value="1"/>
</dbReference>
<dbReference type="PANTHER" id="PTHR19431">
    <property type="entry name" value="60S RIBOSOMAL PROTEIN L4"/>
    <property type="match status" value="1"/>
</dbReference>
<dbReference type="Pfam" id="PF00573">
    <property type="entry name" value="Ribosomal_L4"/>
    <property type="match status" value="1"/>
</dbReference>
<dbReference type="SUPFAM" id="SSF52166">
    <property type="entry name" value="Ribosomal protein L4"/>
    <property type="match status" value="1"/>
</dbReference>
<dbReference type="PROSITE" id="PS00939">
    <property type="entry name" value="RIBOSOMAL_L1E"/>
    <property type="match status" value="1"/>
</dbReference>
<name>RL4_SACI2</name>
<keyword id="KW-0687">Ribonucleoprotein</keyword>
<keyword id="KW-0689">Ribosomal protein</keyword>
<keyword id="KW-0694">RNA-binding</keyword>
<keyword id="KW-0699">rRNA-binding</keyword>